<keyword id="KW-0002">3D-structure</keyword>
<keyword id="KW-1064">Adaptive immunity</keyword>
<keyword id="KW-0025">Alternative splicing</keyword>
<keyword id="KW-1003">Cell membrane</keyword>
<keyword id="KW-1015">Disulfide bond</keyword>
<keyword id="KW-0325">Glycoprotein</keyword>
<keyword id="KW-0391">Immunity</keyword>
<keyword id="KW-0393">Immunoglobulin domain</keyword>
<keyword id="KW-0472">Membrane</keyword>
<keyword id="KW-0597">Phosphoprotein</keyword>
<keyword id="KW-1267">Proteomics identification</keyword>
<keyword id="KW-0675">Receptor</keyword>
<keyword id="KW-1185">Reference proteome</keyword>
<keyword id="KW-0732">Signal</keyword>
<keyword id="KW-0812">Transmembrane</keyword>
<keyword id="KW-1133">Transmembrane helix</keyword>
<accession>Q7Z6A9</accession>
<accession>Q3B831</accession>
<accession>Q3HS85</accession>
<accession>Q6ZNH9</accession>
<dbReference type="EMBL" id="AY293286">
    <property type="protein sequence ID" value="AAP44003.1"/>
    <property type="molecule type" value="mRNA"/>
</dbReference>
<dbReference type="EMBL" id="AY599411">
    <property type="protein sequence ID" value="AAT44901.1"/>
    <property type="molecule type" value="mRNA"/>
</dbReference>
<dbReference type="EMBL" id="DQ198368">
    <property type="protein sequence ID" value="ABA54407.1"/>
    <property type="molecule type" value="mRNA"/>
</dbReference>
<dbReference type="EMBL" id="AC092894">
    <property type="status" value="NOT_ANNOTATED_CDS"/>
    <property type="molecule type" value="Genomic_DNA"/>
</dbReference>
<dbReference type="EMBL" id="BC107091">
    <property type="protein sequence ID" value="AAI07092.1"/>
    <property type="molecule type" value="mRNA"/>
</dbReference>
<dbReference type="EMBL" id="BC107092">
    <property type="protein sequence ID" value="AAI07093.1"/>
    <property type="molecule type" value="mRNA"/>
</dbReference>
<dbReference type="EMBL" id="AK131204">
    <property type="protein sequence ID" value="BAD18396.1"/>
    <property type="status" value="ALT_INIT"/>
    <property type="molecule type" value="mRNA"/>
</dbReference>
<dbReference type="CCDS" id="CCDS33819.1">
    <molecule id="Q7Z6A9-1"/>
</dbReference>
<dbReference type="CCDS" id="CCDS43130.1">
    <molecule id="Q7Z6A9-2"/>
</dbReference>
<dbReference type="RefSeq" id="NP_001078826.1">
    <molecule id="Q7Z6A9-2"/>
    <property type="nucleotide sequence ID" value="NM_001085357.2"/>
</dbReference>
<dbReference type="RefSeq" id="NP_861445.4">
    <molecule id="Q7Z6A9-1"/>
    <property type="nucleotide sequence ID" value="NM_181780.4"/>
</dbReference>
<dbReference type="RefSeq" id="XP_016861237.1">
    <molecule id="Q7Z6A9-1"/>
    <property type="nucleotide sequence ID" value="XM_017005748.3"/>
</dbReference>
<dbReference type="RefSeq" id="XP_047303452.1">
    <molecule id="Q7Z6A9-2"/>
    <property type="nucleotide sequence ID" value="XM_047447496.1"/>
</dbReference>
<dbReference type="PDB" id="2AW2">
    <property type="method" value="X-ray"/>
    <property type="resolution" value="2.80 A"/>
    <property type="chains" value="A/X=26-137"/>
</dbReference>
<dbReference type="PDB" id="6NYP">
    <property type="method" value="X-ray"/>
    <property type="resolution" value="2.70 A"/>
    <property type="chains" value="A/B/C/D=31-137"/>
</dbReference>
<dbReference type="PDB" id="8F60">
    <property type="method" value="X-ray"/>
    <property type="resolution" value="1.64 A"/>
    <property type="chains" value="C=31-150"/>
</dbReference>
<dbReference type="PDB" id="8F6L">
    <property type="method" value="X-ray"/>
    <property type="resolution" value="1.85 A"/>
    <property type="chains" value="C=31-150"/>
</dbReference>
<dbReference type="PDB" id="8F6O">
    <property type="method" value="X-ray"/>
    <property type="resolution" value="2.31 A"/>
    <property type="chains" value="C=31-150"/>
</dbReference>
<dbReference type="PDBsum" id="2AW2"/>
<dbReference type="PDBsum" id="6NYP"/>
<dbReference type="PDBsum" id="8F60"/>
<dbReference type="PDBsum" id="8F6L"/>
<dbReference type="PDBsum" id="8F6O"/>
<dbReference type="SMR" id="Q7Z6A9"/>
<dbReference type="BioGRID" id="127411">
    <property type="interactions" value="39"/>
</dbReference>
<dbReference type="ComplexPortal" id="CPX-9322">
    <property type="entry name" value="B-T lymphocyte attenuator, BTLA-TNFRSF14 complex"/>
</dbReference>
<dbReference type="DIP" id="DIP-48795N"/>
<dbReference type="FunCoup" id="Q7Z6A9">
    <property type="interactions" value="615"/>
</dbReference>
<dbReference type="IntAct" id="Q7Z6A9">
    <property type="interactions" value="31"/>
</dbReference>
<dbReference type="MINT" id="Q7Z6A9"/>
<dbReference type="STRING" id="9606.ENSP00000333919"/>
<dbReference type="GlyCosmos" id="Q7Z6A9">
    <property type="glycosylation" value="3 sites, No reported glycans"/>
</dbReference>
<dbReference type="GlyGen" id="Q7Z6A9">
    <property type="glycosylation" value="3 sites"/>
</dbReference>
<dbReference type="iPTMnet" id="Q7Z6A9"/>
<dbReference type="PhosphoSitePlus" id="Q7Z6A9"/>
<dbReference type="SwissPalm" id="Q7Z6A9"/>
<dbReference type="BioMuta" id="BTLA"/>
<dbReference type="DMDM" id="296439425"/>
<dbReference type="MassIVE" id="Q7Z6A9"/>
<dbReference type="PaxDb" id="9606-ENSP00000333919"/>
<dbReference type="PeptideAtlas" id="Q7Z6A9"/>
<dbReference type="ProteomicsDB" id="69387">
    <molecule id="Q7Z6A9-1"/>
</dbReference>
<dbReference type="ProteomicsDB" id="69388">
    <molecule id="Q7Z6A9-2"/>
</dbReference>
<dbReference type="TopDownProteomics" id="Q7Z6A9-1">
    <molecule id="Q7Z6A9-1"/>
</dbReference>
<dbReference type="TopDownProteomics" id="Q7Z6A9-2">
    <molecule id="Q7Z6A9-2"/>
</dbReference>
<dbReference type="ABCD" id="Q7Z6A9">
    <property type="antibodies" value="2 sequenced antibodies"/>
</dbReference>
<dbReference type="Antibodypedia" id="16304">
    <property type="antibodies" value="963 antibodies from 45 providers"/>
</dbReference>
<dbReference type="CPTC" id="Q7Z6A9">
    <property type="antibodies" value="3 antibodies"/>
</dbReference>
<dbReference type="DNASU" id="151888"/>
<dbReference type="Ensembl" id="ENST00000334529.10">
    <molecule id="Q7Z6A9-1"/>
    <property type="protein sequence ID" value="ENSP00000333919.5"/>
    <property type="gene ID" value="ENSG00000186265.11"/>
</dbReference>
<dbReference type="Ensembl" id="ENST00000383680.5">
    <molecule id="Q7Z6A9-2"/>
    <property type="protein sequence ID" value="ENSP00000373178.4"/>
    <property type="gene ID" value="ENSG00000186265.11"/>
</dbReference>
<dbReference type="GeneID" id="151888"/>
<dbReference type="KEGG" id="hsa:151888"/>
<dbReference type="MANE-Select" id="ENST00000334529.10">
    <property type="protein sequence ID" value="ENSP00000333919.5"/>
    <property type="RefSeq nucleotide sequence ID" value="NM_181780.4"/>
    <property type="RefSeq protein sequence ID" value="NP_861445.4"/>
</dbReference>
<dbReference type="UCSC" id="uc003dza.5">
    <molecule id="Q7Z6A9-1"/>
    <property type="organism name" value="human"/>
</dbReference>
<dbReference type="AGR" id="HGNC:21087"/>
<dbReference type="CTD" id="151888"/>
<dbReference type="DisGeNET" id="151888"/>
<dbReference type="GeneCards" id="BTLA"/>
<dbReference type="HGNC" id="HGNC:21087">
    <property type="gene designation" value="BTLA"/>
</dbReference>
<dbReference type="HPA" id="ENSG00000186265">
    <property type="expression patterns" value="Tissue enriched (lymphoid)"/>
</dbReference>
<dbReference type="MalaCards" id="BTLA"/>
<dbReference type="MIM" id="607925">
    <property type="type" value="gene"/>
</dbReference>
<dbReference type="neXtProt" id="NX_Q7Z6A9"/>
<dbReference type="OpenTargets" id="ENSG00000186265"/>
<dbReference type="PharmGKB" id="PA134968341"/>
<dbReference type="VEuPathDB" id="HostDB:ENSG00000186265"/>
<dbReference type="eggNOG" id="ENOG502S8FS">
    <property type="taxonomic scope" value="Eukaryota"/>
</dbReference>
<dbReference type="GeneTree" id="ENSGT00390000017390"/>
<dbReference type="HOGENOM" id="CLU_085244_0_0_1"/>
<dbReference type="InParanoid" id="Q7Z6A9"/>
<dbReference type="OMA" id="NVTWCKF"/>
<dbReference type="OrthoDB" id="9947981at2759"/>
<dbReference type="PAN-GO" id="Q7Z6A9">
    <property type="GO annotations" value="3 GO annotations based on evolutionary models"/>
</dbReference>
<dbReference type="PhylomeDB" id="Q7Z6A9"/>
<dbReference type="TreeFam" id="TF337694"/>
<dbReference type="PathwayCommons" id="Q7Z6A9"/>
<dbReference type="Reactome" id="R-HSA-9927353">
    <property type="pathway name" value="Co-inhibition by BTLA"/>
</dbReference>
<dbReference type="SignaLink" id="Q7Z6A9"/>
<dbReference type="BioGRID-ORCS" id="151888">
    <property type="hits" value="15 hits in 1154 CRISPR screens"/>
</dbReference>
<dbReference type="EvolutionaryTrace" id="Q7Z6A9"/>
<dbReference type="GeneWiki" id="BTLA"/>
<dbReference type="GenomeRNAi" id="151888"/>
<dbReference type="Pharos" id="Q7Z6A9">
    <property type="development level" value="Tbio"/>
</dbReference>
<dbReference type="PRO" id="PR:Q7Z6A9"/>
<dbReference type="Proteomes" id="UP000005640">
    <property type="component" value="Chromosome 3"/>
</dbReference>
<dbReference type="RNAct" id="Q7Z6A9">
    <property type="molecule type" value="protein"/>
</dbReference>
<dbReference type="Bgee" id="ENSG00000186265">
    <property type="expression patterns" value="Expressed in lymph node and 101 other cell types or tissues"/>
</dbReference>
<dbReference type="GO" id="GO:0005886">
    <property type="term" value="C:plasma membrane"/>
    <property type="evidence" value="ECO:0000318"/>
    <property type="project" value="GO_Central"/>
</dbReference>
<dbReference type="GO" id="GO:0038023">
    <property type="term" value="F:signaling receptor activity"/>
    <property type="evidence" value="ECO:0000314"/>
    <property type="project" value="UniProt"/>
</dbReference>
<dbReference type="GO" id="GO:0002250">
    <property type="term" value="P:adaptive immune response"/>
    <property type="evidence" value="ECO:0007669"/>
    <property type="project" value="UniProtKB-KW"/>
</dbReference>
<dbReference type="GO" id="GO:0002768">
    <property type="term" value="P:immune response-regulating cell surface receptor signaling pathway"/>
    <property type="evidence" value="ECO:0000318"/>
    <property type="project" value="GO_Central"/>
</dbReference>
<dbReference type="GO" id="GO:0042130">
    <property type="term" value="P:negative regulation of T cell proliferation"/>
    <property type="evidence" value="ECO:0000314"/>
    <property type="project" value="UniProt"/>
</dbReference>
<dbReference type="CDD" id="cd20928">
    <property type="entry name" value="IgI_BTLA"/>
    <property type="match status" value="1"/>
</dbReference>
<dbReference type="FunFam" id="2.60.40.10:FF:002143">
    <property type="entry name" value="B- and T-lymphocyte attenuator"/>
    <property type="match status" value="1"/>
</dbReference>
<dbReference type="Gene3D" id="2.60.40.10">
    <property type="entry name" value="Immunoglobulins"/>
    <property type="match status" value="1"/>
</dbReference>
<dbReference type="InterPro" id="IPR039257">
    <property type="entry name" value="BTLA"/>
</dbReference>
<dbReference type="InterPro" id="IPR007110">
    <property type="entry name" value="Ig-like_dom"/>
</dbReference>
<dbReference type="InterPro" id="IPR036179">
    <property type="entry name" value="Ig-like_dom_sf"/>
</dbReference>
<dbReference type="InterPro" id="IPR013783">
    <property type="entry name" value="Ig-like_fold"/>
</dbReference>
<dbReference type="InterPro" id="IPR003599">
    <property type="entry name" value="Ig_sub"/>
</dbReference>
<dbReference type="PANTHER" id="PTHR37996">
    <property type="entry name" value="B- AND T-LYMPHOCYTE ATTENUATOR"/>
    <property type="match status" value="1"/>
</dbReference>
<dbReference type="PANTHER" id="PTHR37996:SF1">
    <property type="entry name" value="B- AND T-LYMPHOCYTE ATTENUATOR"/>
    <property type="match status" value="1"/>
</dbReference>
<dbReference type="SMART" id="SM00409">
    <property type="entry name" value="IG"/>
    <property type="match status" value="1"/>
</dbReference>
<dbReference type="SUPFAM" id="SSF48726">
    <property type="entry name" value="Immunoglobulin"/>
    <property type="match status" value="1"/>
</dbReference>
<dbReference type="PROSITE" id="PS50835">
    <property type="entry name" value="IG_LIKE"/>
    <property type="match status" value="1"/>
</dbReference>
<protein>
    <recommendedName>
        <fullName evidence="14 16">B- and T-lymphocyte attenuator</fullName>
    </recommendedName>
    <alternativeName>
        <fullName>B- and T-lymphocyte-associated protein</fullName>
    </alternativeName>
    <cdAntigenName>CD272</cdAntigenName>
</protein>
<reference key="1">
    <citation type="journal article" date="2003" name="Nat. Immunol.">
        <title>BTLA is a lymphocyte inhibitory receptor with similarities to CTLA-4 and PD-1.</title>
        <authorList>
            <person name="Watanabe N."/>
            <person name="Gavrieli M."/>
            <person name="Sedy J.R."/>
            <person name="Yang J."/>
            <person name="Fallarino F."/>
            <person name="Loftin S.K."/>
            <person name="Hurchla M.A."/>
            <person name="Zimmerman N."/>
            <person name="Sim J."/>
            <person name="Zang X."/>
            <person name="Murphy T.L."/>
            <person name="Russell J.H."/>
            <person name="Allison J.P."/>
            <person name="Murphy K.M."/>
        </authorList>
    </citation>
    <scope>NUCLEOTIDE SEQUENCE [MRNA] (ISOFORM 1)</scope>
    <scope>MUTAGENESIS OF TYR-226; TYR-257 AND TYR-282</scope>
    <scope>GLYCOSYLATION</scope>
    <scope>FUNCTION</scope>
    <scope>INTERACTION WITH PTPN6 AND PTPN11</scope>
    <scope>VARIANTS SER-157 AND LEU-267</scope>
    <scope>SUBCELLULAR LOCATION</scope>
</reference>
<reference key="2">
    <citation type="submission" date="2004-04" db="EMBL/GenBank/DDBJ databases">
        <title>Point mutations in the BTLA gene in multiple myeloma and other hematologic malignancies.</title>
        <authorList>
            <person name="Mao Y."/>
            <person name="Wang X."/>
            <person name="Wu H."/>
            <person name="Chen Y."/>
            <person name="Ge Y."/>
            <person name="Chen J."/>
            <person name="Zhang X."/>
        </authorList>
    </citation>
    <scope>NUCLEOTIDE SEQUENCE [MRNA] (ISOFORM 2)</scope>
    <scope>VARIANT LEU-267</scope>
</reference>
<reference key="3">
    <citation type="submission" date="2005-09" db="EMBL/GenBank/DDBJ databases">
        <title>Human BTLA mRNA alternate splice transcript lacking transmembrane encoding region.</title>
        <authorList>
            <person name="Oaks M.K."/>
            <person name="Tector M.F."/>
            <person name="Mewissen G."/>
        </authorList>
    </citation>
    <scope>NUCLEOTIDE SEQUENCE [MRNA] (ISOFORM 2)</scope>
    <scope>VARIANT LEU-267</scope>
    <source>
        <tissue>Peripheral blood</tissue>
    </source>
</reference>
<reference key="4">
    <citation type="journal article" date="2006" name="Nature">
        <title>The DNA sequence, annotation and analysis of human chromosome 3.</title>
        <authorList>
            <person name="Muzny D.M."/>
            <person name="Scherer S.E."/>
            <person name="Kaul R."/>
            <person name="Wang J."/>
            <person name="Yu J."/>
            <person name="Sudbrak R."/>
            <person name="Buhay C.J."/>
            <person name="Chen R."/>
            <person name="Cree A."/>
            <person name="Ding Y."/>
            <person name="Dugan-Rocha S."/>
            <person name="Gill R."/>
            <person name="Gunaratne P."/>
            <person name="Harris R.A."/>
            <person name="Hawes A.C."/>
            <person name="Hernandez J."/>
            <person name="Hodgson A.V."/>
            <person name="Hume J."/>
            <person name="Jackson A."/>
            <person name="Khan Z.M."/>
            <person name="Kovar-Smith C."/>
            <person name="Lewis L.R."/>
            <person name="Lozado R.J."/>
            <person name="Metzker M.L."/>
            <person name="Milosavljevic A."/>
            <person name="Miner G.R."/>
            <person name="Morgan M.B."/>
            <person name="Nazareth L.V."/>
            <person name="Scott G."/>
            <person name="Sodergren E."/>
            <person name="Song X.-Z."/>
            <person name="Steffen D."/>
            <person name="Wei S."/>
            <person name="Wheeler D.A."/>
            <person name="Wright M.W."/>
            <person name="Worley K.C."/>
            <person name="Yuan Y."/>
            <person name="Zhang Z."/>
            <person name="Adams C.Q."/>
            <person name="Ansari-Lari M.A."/>
            <person name="Ayele M."/>
            <person name="Brown M.J."/>
            <person name="Chen G."/>
            <person name="Chen Z."/>
            <person name="Clendenning J."/>
            <person name="Clerc-Blankenburg K.P."/>
            <person name="Chen R."/>
            <person name="Chen Z."/>
            <person name="Davis C."/>
            <person name="Delgado O."/>
            <person name="Dinh H.H."/>
            <person name="Dong W."/>
            <person name="Draper H."/>
            <person name="Ernst S."/>
            <person name="Fu G."/>
            <person name="Gonzalez-Garay M.L."/>
            <person name="Garcia D.K."/>
            <person name="Gillett W."/>
            <person name="Gu J."/>
            <person name="Hao B."/>
            <person name="Haugen E."/>
            <person name="Havlak P."/>
            <person name="He X."/>
            <person name="Hennig S."/>
            <person name="Hu S."/>
            <person name="Huang W."/>
            <person name="Jackson L.R."/>
            <person name="Jacob L.S."/>
            <person name="Kelly S.H."/>
            <person name="Kube M."/>
            <person name="Levy R."/>
            <person name="Li Z."/>
            <person name="Liu B."/>
            <person name="Liu J."/>
            <person name="Liu W."/>
            <person name="Lu J."/>
            <person name="Maheshwari M."/>
            <person name="Nguyen B.-V."/>
            <person name="Okwuonu G.O."/>
            <person name="Palmeiri A."/>
            <person name="Pasternak S."/>
            <person name="Perez L.M."/>
            <person name="Phelps K.A."/>
            <person name="Plopper F.J."/>
            <person name="Qiang B."/>
            <person name="Raymond C."/>
            <person name="Rodriguez R."/>
            <person name="Saenphimmachak C."/>
            <person name="Santibanez J."/>
            <person name="Shen H."/>
            <person name="Shen Y."/>
            <person name="Subramanian S."/>
            <person name="Tabor P.E."/>
            <person name="Verduzco D."/>
            <person name="Waldron L."/>
            <person name="Wang J."/>
            <person name="Wang J."/>
            <person name="Wang Q."/>
            <person name="Williams G.A."/>
            <person name="Wong G.K.-S."/>
            <person name="Yao Z."/>
            <person name="Zhang J."/>
            <person name="Zhang X."/>
            <person name="Zhao G."/>
            <person name="Zhou J."/>
            <person name="Zhou Y."/>
            <person name="Nelson D."/>
            <person name="Lehrach H."/>
            <person name="Reinhardt R."/>
            <person name="Naylor S.L."/>
            <person name="Yang H."/>
            <person name="Olson M."/>
            <person name="Weinstock G."/>
            <person name="Gibbs R.A."/>
        </authorList>
    </citation>
    <scope>NUCLEOTIDE SEQUENCE [LARGE SCALE GENOMIC DNA]</scope>
</reference>
<reference key="5">
    <citation type="journal article" date="2004" name="Genome Res.">
        <title>The status, quality, and expansion of the NIH full-length cDNA project: the Mammalian Gene Collection (MGC).</title>
        <authorList>
            <consortium name="The MGC Project Team"/>
        </authorList>
    </citation>
    <scope>NUCLEOTIDE SEQUENCE [LARGE SCALE MRNA] (ISOFORM 2)</scope>
    <scope>NUCLEOTIDE SEQUENCE [LARGE SCALE MRNA] OF 2-289 (ISOFORM 1)</scope>
    <scope>VARIANTS SER-157 AND LEU-267</scope>
</reference>
<reference key="6">
    <citation type="journal article" date="2004" name="Nat. Genet.">
        <title>Complete sequencing and characterization of 21,243 full-length human cDNAs.</title>
        <authorList>
            <person name="Ota T."/>
            <person name="Suzuki Y."/>
            <person name="Nishikawa T."/>
            <person name="Otsuki T."/>
            <person name="Sugiyama T."/>
            <person name="Irie R."/>
            <person name="Wakamatsu A."/>
            <person name="Hayashi K."/>
            <person name="Sato H."/>
            <person name="Nagai K."/>
            <person name="Kimura K."/>
            <person name="Makita H."/>
            <person name="Sekine M."/>
            <person name="Obayashi M."/>
            <person name="Nishi T."/>
            <person name="Shibahara T."/>
            <person name="Tanaka T."/>
            <person name="Ishii S."/>
            <person name="Yamamoto J."/>
            <person name="Saito K."/>
            <person name="Kawai Y."/>
            <person name="Isono Y."/>
            <person name="Nakamura Y."/>
            <person name="Nagahari K."/>
            <person name="Murakami K."/>
            <person name="Yasuda T."/>
            <person name="Iwayanagi T."/>
            <person name="Wagatsuma M."/>
            <person name="Shiratori A."/>
            <person name="Sudo H."/>
            <person name="Hosoiri T."/>
            <person name="Kaku Y."/>
            <person name="Kodaira H."/>
            <person name="Kondo H."/>
            <person name="Sugawara M."/>
            <person name="Takahashi M."/>
            <person name="Kanda K."/>
            <person name="Yokoi T."/>
            <person name="Furuya T."/>
            <person name="Kikkawa E."/>
            <person name="Omura Y."/>
            <person name="Abe K."/>
            <person name="Kamihara K."/>
            <person name="Katsuta N."/>
            <person name="Sato K."/>
            <person name="Tanikawa M."/>
            <person name="Yamazaki M."/>
            <person name="Ninomiya K."/>
            <person name="Ishibashi T."/>
            <person name="Yamashita H."/>
            <person name="Murakawa K."/>
            <person name="Fujimori K."/>
            <person name="Tanai H."/>
            <person name="Kimata M."/>
            <person name="Watanabe M."/>
            <person name="Hiraoka S."/>
            <person name="Chiba Y."/>
            <person name="Ishida S."/>
            <person name="Ono Y."/>
            <person name="Takiguchi S."/>
            <person name="Watanabe S."/>
            <person name="Yosida M."/>
            <person name="Hotuta T."/>
            <person name="Kusano J."/>
            <person name="Kanehori K."/>
            <person name="Takahashi-Fujii A."/>
            <person name="Hara H."/>
            <person name="Tanase T.-O."/>
            <person name="Nomura Y."/>
            <person name="Togiya S."/>
            <person name="Komai F."/>
            <person name="Hara R."/>
            <person name="Takeuchi K."/>
            <person name="Arita M."/>
            <person name="Imose N."/>
            <person name="Musashino K."/>
            <person name="Yuuki H."/>
            <person name="Oshima A."/>
            <person name="Sasaki N."/>
            <person name="Aotsuka S."/>
            <person name="Yoshikawa Y."/>
            <person name="Matsunawa H."/>
            <person name="Ichihara T."/>
            <person name="Shiohata N."/>
            <person name="Sano S."/>
            <person name="Moriya S."/>
            <person name="Momiyama H."/>
            <person name="Satoh N."/>
            <person name="Takami S."/>
            <person name="Terashima Y."/>
            <person name="Suzuki O."/>
            <person name="Nakagawa S."/>
            <person name="Senoh A."/>
            <person name="Mizoguchi H."/>
            <person name="Goto Y."/>
            <person name="Shimizu F."/>
            <person name="Wakebe H."/>
            <person name="Hishigaki H."/>
            <person name="Watanabe T."/>
            <person name="Sugiyama A."/>
            <person name="Takemoto M."/>
            <person name="Kawakami B."/>
            <person name="Yamazaki M."/>
            <person name="Watanabe K."/>
            <person name="Kumagai A."/>
            <person name="Itakura S."/>
            <person name="Fukuzumi Y."/>
            <person name="Fujimori Y."/>
            <person name="Komiyama M."/>
            <person name="Tashiro H."/>
            <person name="Tanigami A."/>
            <person name="Fujiwara T."/>
            <person name="Ono T."/>
            <person name="Yamada K."/>
            <person name="Fujii Y."/>
            <person name="Ozaki K."/>
            <person name="Hirao M."/>
            <person name="Ohmori Y."/>
            <person name="Kawabata A."/>
            <person name="Hikiji T."/>
            <person name="Kobatake N."/>
            <person name="Inagaki H."/>
            <person name="Ikema Y."/>
            <person name="Okamoto S."/>
            <person name="Okitani R."/>
            <person name="Kawakami T."/>
            <person name="Noguchi S."/>
            <person name="Itoh T."/>
            <person name="Shigeta K."/>
            <person name="Senba T."/>
            <person name="Matsumura K."/>
            <person name="Nakajima Y."/>
            <person name="Mizuno T."/>
            <person name="Morinaga M."/>
            <person name="Sasaki M."/>
            <person name="Togashi T."/>
            <person name="Oyama M."/>
            <person name="Hata H."/>
            <person name="Watanabe M."/>
            <person name="Komatsu T."/>
            <person name="Mizushima-Sugano J."/>
            <person name="Satoh T."/>
            <person name="Shirai Y."/>
            <person name="Takahashi Y."/>
            <person name="Nakagawa K."/>
            <person name="Okumura K."/>
            <person name="Nagase T."/>
            <person name="Nomura N."/>
            <person name="Kikuchi H."/>
            <person name="Masuho Y."/>
            <person name="Yamashita R."/>
            <person name="Nakai K."/>
            <person name="Yada T."/>
            <person name="Nakamura Y."/>
            <person name="Ohara O."/>
            <person name="Isogai T."/>
            <person name="Sugano S."/>
        </authorList>
    </citation>
    <scope>NUCLEOTIDE SEQUENCE [LARGE SCALE MRNA] OF 4-289 (ISOFORM 1)</scope>
    <scope>VARIANTS SER-157 AND LEU-267</scope>
    <source>
        <tissue>Trachea</tissue>
    </source>
</reference>
<reference key="7">
    <citation type="journal article" date="2003" name="Biochem. Biophys. Res. Commun.">
        <title>Characterization of phosphotyrosine binding motifs in the cytoplasmic domain of B and T lymphocyte attenuator required for association with protein tyrosine phosphatases SHP-1 and SHP-2.</title>
        <authorList>
            <person name="Gavrieli M."/>
            <person name="Watanabe N."/>
            <person name="Loftin S.K."/>
            <person name="Murphy T.L."/>
            <person name="Murphy K.M."/>
        </authorList>
    </citation>
    <scope>FUNCTION</scope>
    <scope>MUTAGENESIS OF TYR-226; TYR-257 AND TYR-282</scope>
    <scope>INTERACTION WITH PTPN6 AND PTPN11</scope>
</reference>
<reference key="8">
    <citation type="journal article" date="2005" name="Nat. Immunol.">
        <title>B and T lymphocyte attenuator regulates T cell activation through interaction with herpesvirus entry mediator.</title>
        <authorList>
            <person name="Sedy J.R."/>
            <person name="Gavrieli M."/>
            <person name="Potter K.G."/>
            <person name="Hurchla M.A."/>
            <person name="Lindsley R.C."/>
            <person name="Hildner K."/>
            <person name="Scheu S."/>
            <person name="Pfeffer K."/>
            <person name="Ware C.F."/>
            <person name="Murphy T.L."/>
            <person name="Murphy K.M."/>
        </authorList>
    </citation>
    <scope>FUNCTION</scope>
    <scope>INTERACTION WITH TNFRSF14</scope>
    <scope>PHOSPHORYLATION</scope>
</reference>
<reference key="9">
    <citation type="journal article" date="2008" name="Nat. Immunol.">
        <title>CD160 inhibits activation of human CD4+ T cells through interaction with herpesvirus entry mediator.</title>
        <authorList>
            <person name="Cai G."/>
            <person name="Anumanthan A."/>
            <person name="Brown J.A."/>
            <person name="Greenfield E.A."/>
            <person name="Zhu B."/>
            <person name="Freeman G.J."/>
        </authorList>
    </citation>
    <scope>FUNCTION</scope>
    <scope>SUBUNIT</scope>
    <scope>INTERACTION WITH TNFRSF14</scope>
</reference>
<reference key="10">
    <citation type="journal article" date="2009" name="J. Immunol.">
        <title>T cell intrinsic heterodimeric complexes between HVEM and BTLA determine receptivity to the surrounding microenvironment.</title>
        <authorList>
            <person name="Cheung T.C."/>
            <person name="Oborne L.M."/>
            <person name="Steinberg M.W."/>
            <person name="Macauley M.G."/>
            <person name="Fukuyama S."/>
            <person name="Sanjo H."/>
            <person name="D'Souza C."/>
            <person name="Norris P.S."/>
            <person name="Pfeffer K."/>
            <person name="Murphy K.M."/>
            <person name="Kronenberg M."/>
            <person name="Spear P.G."/>
            <person name="Ware C.F."/>
        </authorList>
    </citation>
    <scope>FUNCTION</scope>
    <scope>SUBUNIT</scope>
    <scope>INTERACTION WITH TNFRSF14</scope>
</reference>
<reference key="11">
    <citation type="journal article" date="2005" name="J. Biol. Chem.">
        <title>Attenuating lymphocyte activity: the crystal structure of the BTLA-HVEM complex.</title>
        <authorList>
            <person name="Compaan D.M."/>
            <person name="Gonzalez L.C."/>
            <person name="Tom I."/>
            <person name="Loyet K.M."/>
            <person name="Eaton D."/>
            <person name="Hymowitz S.G."/>
        </authorList>
    </citation>
    <scope>X-RAY CRYSTALLOGRAPHY (2.8 ANGSTROMS) OF 26-137 IN COMPLEX WITH TNFRSF14</scope>
    <scope>DISULFIDE BONDS</scope>
</reference>
<name>BTLA_HUMAN</name>
<feature type="signal peptide" evidence="1">
    <location>
        <begin position="1"/>
        <end position="30"/>
    </location>
</feature>
<feature type="chain" id="PRO_0000014523" description="B- and T-lymphocyte attenuator">
    <location>
        <begin position="31"/>
        <end position="289"/>
    </location>
</feature>
<feature type="topological domain" description="Extracellular" evidence="1">
    <location>
        <begin position="31"/>
        <end position="157"/>
    </location>
</feature>
<feature type="transmembrane region" description="Helical" evidence="1">
    <location>
        <begin position="158"/>
        <end position="178"/>
    </location>
</feature>
<feature type="topological domain" description="Cytoplasmic" evidence="1">
    <location>
        <begin position="179"/>
        <end position="289"/>
    </location>
</feature>
<feature type="domain" description="Ig-like V-type">
    <location>
        <begin position="31"/>
        <end position="132"/>
    </location>
</feature>
<feature type="glycosylation site" description="N-linked (GlcNAc...) asparagine" evidence="1">
    <location>
        <position position="75"/>
    </location>
</feature>
<feature type="glycosylation site" description="N-linked (GlcNAc...) asparagine" evidence="1">
    <location>
        <position position="94"/>
    </location>
</feature>
<feature type="glycosylation site" description="N-linked (GlcNAc...) asparagine" evidence="1">
    <location>
        <position position="110"/>
    </location>
</feature>
<feature type="disulfide bond" evidence="2 8">
    <location>
        <begin position="34"/>
        <end position="63"/>
    </location>
</feature>
<feature type="disulfide bond" evidence="2 8">
    <location>
        <begin position="58"/>
        <end position="115"/>
    </location>
</feature>
<feature type="disulfide bond" evidence="2 8">
    <location>
        <begin position="72"/>
        <end position="79"/>
    </location>
</feature>
<feature type="splice variant" id="VSP_040305" description="In isoform 2." evidence="15 17 18">
    <location>
        <begin position="135"/>
        <end position="182"/>
    </location>
</feature>
<feature type="sequence variant" id="VAR_056027" description="In dbSNP:rs16859633.">
    <original>I</original>
    <variation>V</variation>
    <location>
        <position position="124"/>
    </location>
</feature>
<feature type="sequence variant" id="VAR_027607" description="In dbSNP:rs2931761." evidence="3 5 6">
    <original>R</original>
    <variation>S</variation>
    <location>
        <position position="157"/>
    </location>
</feature>
<feature type="sequence variant" id="VAR_027608" description="In dbSNP:rs9288952." evidence="3 5 6 11 12">
    <original>P</original>
    <variation>L</variation>
    <location>
        <position position="267"/>
    </location>
</feature>
<feature type="mutagenesis site" description="No change of phosphorylation implicated in interaction with PTPN6 and PTPN11. Severe reduction of phosphorylation; when associated with F-257 and/or F-282." evidence="3 4">
    <original>Y</original>
    <variation>F</variation>
    <location>
        <position position="226"/>
    </location>
</feature>
<feature type="mutagenesis site" description="No change of phosphorylation implicated in interaction with PTPN6 and PTPN11. Severe reduction of phosphorylation; when associated with F-226 and/or F-282." evidence="3 4">
    <original>Y</original>
    <variation>F</variation>
    <location>
        <position position="257"/>
    </location>
</feature>
<feature type="mutagenesis site" description="No change of phosphorylation implicated in interaction with PTPN6 and PTPN11. Severe reduction of phosphorylation; when associated with F-226 and/or F-257." evidence="3 4">
    <original>Y</original>
    <variation>F</variation>
    <location>
        <position position="282"/>
    </location>
</feature>
<feature type="sequence conflict" description="In Ref. 1; AAP44003." evidence="19" ref="1">
    <original>V</original>
    <variation>M</variation>
    <location>
        <position position="105"/>
    </location>
</feature>
<feature type="sequence conflict" description="In Ref. 1; AAP44003." evidence="19" ref="1">
    <original>S</original>
    <variation>G</variation>
    <location>
        <position position="138"/>
    </location>
</feature>
<feature type="sequence conflict" description="In Ref. 1; AAP44003." evidence="19" ref="1">
    <original>M</original>
    <variation>V</variation>
    <location>
        <position position="148"/>
    </location>
</feature>
<feature type="sequence conflict" description="In Ref. 1; AAP44003." evidence="19" ref="1">
    <original>C</original>
    <variation>W</variation>
    <location>
        <position position="171"/>
    </location>
</feature>
<feature type="sequence conflict" description="In Ref. 6; BAD18396." evidence="19" ref="6">
    <original>L</original>
    <variation>P</variation>
    <location>
        <position position="219"/>
    </location>
</feature>
<feature type="sequence conflict" description="In Ref. 1; AAP44003." evidence="19" ref="1">
    <original>T</original>
    <variation>A</variation>
    <location>
        <position position="223"/>
    </location>
</feature>
<feature type="sequence conflict" description="In Ref. 1; AAP44003." evidence="19" ref="1">
    <original>Y</original>
    <variation>C</variation>
    <location>
        <position position="243"/>
    </location>
</feature>
<feature type="strand" evidence="21">
    <location>
        <begin position="44"/>
        <end position="49"/>
    </location>
</feature>
<feature type="strand" evidence="21">
    <location>
        <begin position="54"/>
        <end position="61"/>
    </location>
</feature>
<feature type="strand" evidence="21">
    <location>
        <begin position="63"/>
        <end position="65"/>
    </location>
</feature>
<feature type="strand" evidence="21">
    <location>
        <begin position="70"/>
        <end position="75"/>
    </location>
</feature>
<feature type="strand" evidence="21">
    <location>
        <begin position="78"/>
        <end position="81"/>
    </location>
</feature>
<feature type="strand" evidence="21">
    <location>
        <begin position="87"/>
        <end position="92"/>
    </location>
</feature>
<feature type="strand" evidence="21">
    <location>
        <begin position="95"/>
        <end position="102"/>
    </location>
</feature>
<feature type="helix" evidence="21">
    <location>
        <begin position="107"/>
        <end position="109"/>
    </location>
</feature>
<feature type="strand" evidence="21">
    <location>
        <begin position="111"/>
        <end position="119"/>
    </location>
</feature>
<feature type="strand" evidence="21">
    <location>
        <begin position="122"/>
        <end position="125"/>
    </location>
</feature>
<feature type="strand" evidence="21">
    <location>
        <begin position="129"/>
        <end position="134"/>
    </location>
</feature>
<evidence type="ECO:0000255" key="1"/>
<evidence type="ECO:0000255" key="2">
    <source>
        <dbReference type="PROSITE-ProRule" id="PRU00114"/>
    </source>
</evidence>
<evidence type="ECO:0000269" key="3">
    <source>
    </source>
</evidence>
<evidence type="ECO:0000269" key="4">
    <source>
    </source>
</evidence>
<evidence type="ECO:0000269" key="5">
    <source>
    </source>
</evidence>
<evidence type="ECO:0000269" key="6">
    <source>
    </source>
</evidence>
<evidence type="ECO:0000269" key="7">
    <source>
    </source>
</evidence>
<evidence type="ECO:0000269" key="8">
    <source>
    </source>
</evidence>
<evidence type="ECO:0000269" key="9">
    <source>
    </source>
</evidence>
<evidence type="ECO:0000269" key="10">
    <source>
    </source>
</evidence>
<evidence type="ECO:0000269" key="11">
    <source ref="2"/>
</evidence>
<evidence type="ECO:0000269" key="12">
    <source ref="3"/>
</evidence>
<evidence type="ECO:0000303" key="13">
    <source>
    </source>
</evidence>
<evidence type="ECO:0000303" key="14">
    <source>
    </source>
</evidence>
<evidence type="ECO:0000303" key="15">
    <source>
    </source>
</evidence>
<evidence type="ECO:0000303" key="16">
    <source>
    </source>
</evidence>
<evidence type="ECO:0000303" key="17">
    <source ref="2"/>
</evidence>
<evidence type="ECO:0000303" key="18">
    <source ref="3"/>
</evidence>
<evidence type="ECO:0000305" key="19"/>
<evidence type="ECO:0000312" key="20">
    <source>
        <dbReference type="HGNC" id="HGNC:21087"/>
    </source>
</evidence>
<evidence type="ECO:0007829" key="21">
    <source>
        <dbReference type="PDB" id="8F60"/>
    </source>
</evidence>
<sequence length="289" mass="32834">MKTLPAMLGTGKLFWVFFLIPYLDIWNIHGKESCDVQLYIKRQSEHSILAGDPFELECPVKYCANRPHVTWCKLNGTTCVKLEDRQTSWKEEKNISFFILHFEPVLPNDNGSYRCSANFQSNLIESHSTTLYVTDVKSASERPSKDEMASRPWLLYRLLPLGGLPLLITTCFCLFCCLRRHQGKQNELSDTAGREINLVDAHLKSEQTEASTRQNSQVLLSETGIYDNDPDLCFRMQEGSEVYSNPCLEENKPGIVYASLNHSVIGPNSRLARNVKEAPTEYASICVRS</sequence>
<gene>
    <name evidence="13 20" type="primary">BTLA</name>
</gene>
<organism>
    <name type="scientific">Homo sapiens</name>
    <name type="common">Human</name>
    <dbReference type="NCBI Taxonomy" id="9606"/>
    <lineage>
        <taxon>Eukaryota</taxon>
        <taxon>Metazoa</taxon>
        <taxon>Chordata</taxon>
        <taxon>Craniata</taxon>
        <taxon>Vertebrata</taxon>
        <taxon>Euteleostomi</taxon>
        <taxon>Mammalia</taxon>
        <taxon>Eutheria</taxon>
        <taxon>Euarchontoglires</taxon>
        <taxon>Primates</taxon>
        <taxon>Haplorrhini</taxon>
        <taxon>Catarrhini</taxon>
        <taxon>Hominidae</taxon>
        <taxon>Homo</taxon>
    </lineage>
</organism>
<comment type="function">
    <text evidence="3 4 7 9 10">Inhibitory receptor on lymphocytes that negatively regulates antigen receptor signaling via PTPN6/SHP-1 and PTPN11/SHP-2 (PubMed:12796776, PubMed:14652006, PubMed:15568026, PubMed:18193050). May interact in cis (on the same cell) or in trans (on other cells) with TNFRSF14 (PubMed:19915044). In cis interactions, appears to play an immune regulatory role inhibiting in trans interactions in naive T cells to maintain a resting state. In trans interactions, can predominate during adaptive immune response to provide survival signals to effector T cells (PubMed:19915044).</text>
</comment>
<comment type="subunit">
    <text evidence="3 4 7 8 9 10">Interacts with tyrosine phosphatases PTPN6/SHP-1 and PTPN11/SHP-2 (PubMed:12796776, PubMed:14652006). Interacts with TNFRSF14/HVEM (via cysteine-rich domain 1) (PubMed:15568026, PubMed:18193050, PubMed:19915044).</text>
</comment>
<comment type="subcellular location">
    <subcellularLocation>
        <location evidence="3">Cell membrane</location>
        <topology evidence="19">Single-pass type I membrane protein</topology>
    </subcellularLocation>
</comment>
<comment type="alternative products">
    <event type="alternative splicing"/>
    <isoform>
        <id>Q7Z6A9-1</id>
        <name>1</name>
        <sequence type="displayed"/>
    </isoform>
    <isoform>
        <id>Q7Z6A9-2</id>
        <name>2</name>
        <sequence type="described" ref="VSP_040305"/>
    </isoform>
</comment>
<comment type="PTM">
    <text evidence="7">Phosphorylated on Tyr residues by TNFRSF14 and by antigen receptors cross-linking, both inducing association with PTPN6 and PTPN11.</text>
</comment>
<comment type="PTM">
    <text evidence="3">N-glycosylated.</text>
</comment>
<comment type="sequence caution" evidence="19">
    <conflict type="erroneous initiation">
        <sequence resource="EMBL-CDS" id="BAD18396"/>
    </conflict>
    <text>Truncated N-terminus.</text>
</comment>
<proteinExistence type="evidence at protein level"/>